<reference key="1">
    <citation type="journal article" date="2010" name="J. Bacteriol.">
        <title>Complete genome sequence of the aerobic facultative methanotroph Methylocella silvestris BL2.</title>
        <authorList>
            <person name="Chen Y."/>
            <person name="Crombie A."/>
            <person name="Rahman M.T."/>
            <person name="Dedysh S.N."/>
            <person name="Liesack W."/>
            <person name="Stott M.B."/>
            <person name="Alam M."/>
            <person name="Theisen A.R."/>
            <person name="Murrell J.C."/>
            <person name="Dunfield P.F."/>
        </authorList>
    </citation>
    <scope>NUCLEOTIDE SEQUENCE [LARGE SCALE GENOMIC DNA]</scope>
    <source>
        <strain>DSM 15510 / CIP 108128 / LMG 27833 / NCIMB 13906 / BL2</strain>
    </source>
</reference>
<evidence type="ECO:0000255" key="1">
    <source>
        <dbReference type="HAMAP-Rule" id="MF_00083"/>
    </source>
</evidence>
<accession>B8EK40</accession>
<proteinExistence type="inferred from homology"/>
<organism>
    <name type="scientific">Methylocella silvestris (strain DSM 15510 / CIP 108128 / LMG 27833 / NCIMB 13906 / BL2)</name>
    <dbReference type="NCBI Taxonomy" id="395965"/>
    <lineage>
        <taxon>Bacteria</taxon>
        <taxon>Pseudomonadati</taxon>
        <taxon>Pseudomonadota</taxon>
        <taxon>Alphaproteobacteria</taxon>
        <taxon>Hyphomicrobiales</taxon>
        <taxon>Beijerinckiaceae</taxon>
        <taxon>Methylocella</taxon>
    </lineage>
</organism>
<feature type="chain" id="PRO_1000118399" description="Peptidyl-tRNA hydrolase">
    <location>
        <begin position="1"/>
        <end position="196"/>
    </location>
</feature>
<feature type="active site" description="Proton acceptor" evidence="1">
    <location>
        <position position="19"/>
    </location>
</feature>
<feature type="binding site" evidence="1">
    <location>
        <position position="14"/>
    </location>
    <ligand>
        <name>tRNA</name>
        <dbReference type="ChEBI" id="CHEBI:17843"/>
    </ligand>
</feature>
<feature type="binding site" evidence="1">
    <location>
        <position position="64"/>
    </location>
    <ligand>
        <name>tRNA</name>
        <dbReference type="ChEBI" id="CHEBI:17843"/>
    </ligand>
</feature>
<feature type="binding site" evidence="1">
    <location>
        <position position="66"/>
    </location>
    <ligand>
        <name>tRNA</name>
        <dbReference type="ChEBI" id="CHEBI:17843"/>
    </ligand>
</feature>
<feature type="binding site" evidence="1">
    <location>
        <position position="112"/>
    </location>
    <ligand>
        <name>tRNA</name>
        <dbReference type="ChEBI" id="CHEBI:17843"/>
    </ligand>
</feature>
<feature type="site" description="Discriminates between blocked and unblocked aminoacyl-tRNA" evidence="1">
    <location>
        <position position="9"/>
    </location>
</feature>
<feature type="site" description="Stabilizes the basic form of H active site to accept a proton" evidence="1">
    <location>
        <position position="91"/>
    </location>
</feature>
<keyword id="KW-0963">Cytoplasm</keyword>
<keyword id="KW-0378">Hydrolase</keyword>
<keyword id="KW-1185">Reference proteome</keyword>
<keyword id="KW-0694">RNA-binding</keyword>
<keyword id="KW-0820">tRNA-binding</keyword>
<dbReference type="EC" id="3.1.1.29" evidence="1"/>
<dbReference type="EMBL" id="CP001280">
    <property type="protein sequence ID" value="ACK50580.1"/>
    <property type="molecule type" value="Genomic_DNA"/>
</dbReference>
<dbReference type="RefSeq" id="WP_012590650.1">
    <property type="nucleotide sequence ID" value="NC_011666.1"/>
</dbReference>
<dbReference type="SMR" id="B8EK40"/>
<dbReference type="STRING" id="395965.Msil_1632"/>
<dbReference type="KEGG" id="msl:Msil_1632"/>
<dbReference type="eggNOG" id="COG0193">
    <property type="taxonomic scope" value="Bacteria"/>
</dbReference>
<dbReference type="HOGENOM" id="CLU_062456_1_0_5"/>
<dbReference type="OrthoDB" id="9800507at2"/>
<dbReference type="Proteomes" id="UP000002257">
    <property type="component" value="Chromosome"/>
</dbReference>
<dbReference type="GO" id="GO:0005737">
    <property type="term" value="C:cytoplasm"/>
    <property type="evidence" value="ECO:0007669"/>
    <property type="project" value="UniProtKB-SubCell"/>
</dbReference>
<dbReference type="GO" id="GO:0004045">
    <property type="term" value="F:peptidyl-tRNA hydrolase activity"/>
    <property type="evidence" value="ECO:0007669"/>
    <property type="project" value="UniProtKB-UniRule"/>
</dbReference>
<dbReference type="GO" id="GO:0000049">
    <property type="term" value="F:tRNA binding"/>
    <property type="evidence" value="ECO:0007669"/>
    <property type="project" value="UniProtKB-UniRule"/>
</dbReference>
<dbReference type="GO" id="GO:0006515">
    <property type="term" value="P:protein quality control for misfolded or incompletely synthesized proteins"/>
    <property type="evidence" value="ECO:0007669"/>
    <property type="project" value="UniProtKB-UniRule"/>
</dbReference>
<dbReference type="GO" id="GO:0072344">
    <property type="term" value="P:rescue of stalled ribosome"/>
    <property type="evidence" value="ECO:0007669"/>
    <property type="project" value="UniProtKB-UniRule"/>
</dbReference>
<dbReference type="CDD" id="cd00462">
    <property type="entry name" value="PTH"/>
    <property type="match status" value="1"/>
</dbReference>
<dbReference type="FunFam" id="3.40.50.1470:FF:000001">
    <property type="entry name" value="Peptidyl-tRNA hydrolase"/>
    <property type="match status" value="1"/>
</dbReference>
<dbReference type="Gene3D" id="3.40.50.1470">
    <property type="entry name" value="Peptidyl-tRNA hydrolase"/>
    <property type="match status" value="1"/>
</dbReference>
<dbReference type="HAMAP" id="MF_00083">
    <property type="entry name" value="Pept_tRNA_hydro_bact"/>
    <property type="match status" value="1"/>
</dbReference>
<dbReference type="InterPro" id="IPR001328">
    <property type="entry name" value="Pept_tRNA_hydro"/>
</dbReference>
<dbReference type="InterPro" id="IPR018171">
    <property type="entry name" value="Pept_tRNA_hydro_CS"/>
</dbReference>
<dbReference type="InterPro" id="IPR036416">
    <property type="entry name" value="Pept_tRNA_hydro_sf"/>
</dbReference>
<dbReference type="NCBIfam" id="TIGR00447">
    <property type="entry name" value="pth"/>
    <property type="match status" value="1"/>
</dbReference>
<dbReference type="PANTHER" id="PTHR17224">
    <property type="entry name" value="PEPTIDYL-TRNA HYDROLASE"/>
    <property type="match status" value="1"/>
</dbReference>
<dbReference type="PANTHER" id="PTHR17224:SF1">
    <property type="entry name" value="PEPTIDYL-TRNA HYDROLASE"/>
    <property type="match status" value="1"/>
</dbReference>
<dbReference type="Pfam" id="PF01195">
    <property type="entry name" value="Pept_tRNA_hydro"/>
    <property type="match status" value="1"/>
</dbReference>
<dbReference type="SUPFAM" id="SSF53178">
    <property type="entry name" value="Peptidyl-tRNA hydrolase-like"/>
    <property type="match status" value="1"/>
</dbReference>
<dbReference type="PROSITE" id="PS01195">
    <property type="entry name" value="PEPT_TRNA_HYDROL_1"/>
    <property type="match status" value="1"/>
</dbReference>
<dbReference type="PROSITE" id="PS01196">
    <property type="entry name" value="PEPT_TRNA_HYDROL_2"/>
    <property type="match status" value="1"/>
</dbReference>
<sequence>MILLVGLGNPGKAYAGNRHNIGFMALDQIARDYSAPPFRSKFNGLISEITLAGERCVLLAPQTYMNDSGRSVGEAARYLKIEPKDIVVLHDELDLPAGKVRVKTGGGNAGHNGLKSITAHIGNEYRRVRLGIGHPGDRALVHNYVLGDFAKSEAAWVEALCKAVAASAPLLAKGEDDAFQTKIFKDMEAALGKNVP</sequence>
<protein>
    <recommendedName>
        <fullName evidence="1">Peptidyl-tRNA hydrolase</fullName>
        <shortName evidence="1">Pth</shortName>
        <ecNumber evidence="1">3.1.1.29</ecNumber>
    </recommendedName>
</protein>
<comment type="function">
    <text evidence="1">Hydrolyzes ribosome-free peptidyl-tRNAs (with 1 or more amino acids incorporated), which drop off the ribosome during protein synthesis, or as a result of ribosome stalling.</text>
</comment>
<comment type="function">
    <text evidence="1">Catalyzes the release of premature peptidyl moieties from peptidyl-tRNA molecules trapped in stalled 50S ribosomal subunits, and thus maintains levels of free tRNAs and 50S ribosomes.</text>
</comment>
<comment type="catalytic activity">
    <reaction evidence="1">
        <text>an N-acyl-L-alpha-aminoacyl-tRNA + H2O = an N-acyl-L-amino acid + a tRNA + H(+)</text>
        <dbReference type="Rhea" id="RHEA:54448"/>
        <dbReference type="Rhea" id="RHEA-COMP:10123"/>
        <dbReference type="Rhea" id="RHEA-COMP:13883"/>
        <dbReference type="ChEBI" id="CHEBI:15377"/>
        <dbReference type="ChEBI" id="CHEBI:15378"/>
        <dbReference type="ChEBI" id="CHEBI:59874"/>
        <dbReference type="ChEBI" id="CHEBI:78442"/>
        <dbReference type="ChEBI" id="CHEBI:138191"/>
        <dbReference type="EC" id="3.1.1.29"/>
    </reaction>
</comment>
<comment type="subunit">
    <text evidence="1">Monomer.</text>
</comment>
<comment type="subcellular location">
    <subcellularLocation>
        <location evidence="1">Cytoplasm</location>
    </subcellularLocation>
</comment>
<comment type="similarity">
    <text evidence="1">Belongs to the PTH family.</text>
</comment>
<name>PTH_METSB</name>
<gene>
    <name evidence="1" type="primary">pth</name>
    <name type="ordered locus">Msil_1632</name>
</gene>